<gene>
    <name type="primary">manF</name>
    <name type="ORF">NFIA_099770</name>
</gene>
<accession>A1DBV1</accession>
<name>MANF_NEOFI</name>
<protein>
    <recommendedName>
        <fullName>Probable mannan endo-1,4-beta-mannosidase F</fullName>
        <ecNumber>3.2.1.78</ecNumber>
    </recommendedName>
    <alternativeName>
        <fullName>Endo-beta-1,4-mannanase F</fullName>
    </alternativeName>
</protein>
<proteinExistence type="inferred from homology"/>
<organism>
    <name type="scientific">Neosartorya fischeri (strain ATCC 1020 / DSM 3700 / CBS 544.65 / FGSC A1164 / JCM 1740 / NRRL 181 / WB 181)</name>
    <name type="common">Aspergillus fischerianus</name>
    <dbReference type="NCBI Taxonomy" id="331117"/>
    <lineage>
        <taxon>Eukaryota</taxon>
        <taxon>Fungi</taxon>
        <taxon>Dikarya</taxon>
        <taxon>Ascomycota</taxon>
        <taxon>Pezizomycotina</taxon>
        <taxon>Eurotiomycetes</taxon>
        <taxon>Eurotiomycetidae</taxon>
        <taxon>Eurotiales</taxon>
        <taxon>Aspergillaceae</taxon>
        <taxon>Aspergillus</taxon>
        <taxon>Aspergillus subgen. Fumigati</taxon>
    </lineage>
</organism>
<evidence type="ECO:0000250" key="1"/>
<evidence type="ECO:0000250" key="2">
    <source>
        <dbReference type="UniProtKB" id="B4XC07"/>
    </source>
</evidence>
<evidence type="ECO:0000250" key="3">
    <source>
        <dbReference type="UniProtKB" id="Q99036"/>
    </source>
</evidence>
<evidence type="ECO:0000255" key="4"/>
<evidence type="ECO:0000255" key="5">
    <source>
        <dbReference type="PROSITE-ProRule" id="PRU00597"/>
    </source>
</evidence>
<evidence type="ECO:0000256" key="6">
    <source>
        <dbReference type="SAM" id="MobiDB-lite"/>
    </source>
</evidence>
<evidence type="ECO:0000305" key="7"/>
<sequence>MRPLSSAALLSAIGAVAAQVGPWGQCGGQSYTGGTSCVSGWACVFLNDWYSQCQPGAEYTPPLCGRNDNPNIFQATTTSTSVSATAPPSSTSSSTASVSSSTSSTPIPTSSGSFVKAEGLKFNIDGETKYFAGTNAYWLPFLTNNADVDSVFDHLQQTGLKILRTWGFNDVNSVPNPGTVYFQLHDPSTSTTTINTGADGLQRLDYVVSAAEKHGIKLLIPLVNNWDDYGGMNAYIKAYGGSKTEWYTNSKIQSVYQAYIKAVVSRYRDSPAIMAWELSNEARCQGCSTDVIYNWATKTSAYIKSLDPNHMVATGEEGMGLTVDSDGSYPYSTYEGSDFEKNLAIPHIDFGVFHLYTADWGITDNSWGNRWVTSHAKLCEAAGKPCLFEEYGLKDDHCSAAVVWQKTSLTTAGMAADLFWQYGQTLSTGQSPNDRYTIYYGTSDWQCAVIDHVSRI</sequence>
<comment type="function">
    <text evidence="1">Endo-1,4-mannanase, a crucial enzyme for depolymerization of seed galactomannans and wood galactoglucomannans.</text>
</comment>
<comment type="catalytic activity">
    <reaction>
        <text>Random hydrolysis of (1-&gt;4)-beta-D-mannosidic linkages in mannans, galactomannans and glucomannans.</text>
        <dbReference type="EC" id="3.2.1.78"/>
    </reaction>
</comment>
<comment type="subcellular location">
    <subcellularLocation>
        <location evidence="1">Secreted</location>
    </subcellularLocation>
</comment>
<comment type="domain">
    <text>Has a modular structure: a carbohydrate-binding module (CBM) at the N-terminus, a linker rich in serines, and a C-terminal endo-1,4-mannanase catalytic module. The genes for catalytic modules and CBMs seem to have evolved separately and have been linked by gene fusion.</text>
</comment>
<comment type="similarity">
    <text evidence="7">Belongs to the glycosyl hydrolase 5 (cellulase A) family.</text>
</comment>
<dbReference type="EC" id="3.2.1.78"/>
<dbReference type="EMBL" id="DS027694">
    <property type="protein sequence ID" value="EAW20341.1"/>
    <property type="molecule type" value="Genomic_DNA"/>
</dbReference>
<dbReference type="RefSeq" id="XP_001262238.1">
    <property type="nucleotide sequence ID" value="XM_001262237.1"/>
</dbReference>
<dbReference type="SMR" id="A1DBV1"/>
<dbReference type="STRING" id="331117.A1DBV1"/>
<dbReference type="EnsemblFungi" id="EAW20341">
    <property type="protein sequence ID" value="EAW20341"/>
    <property type="gene ID" value="NFIA_099770"/>
</dbReference>
<dbReference type="GeneID" id="4588382"/>
<dbReference type="KEGG" id="nfi:NFIA_099770"/>
<dbReference type="VEuPathDB" id="FungiDB:NFIA_099770"/>
<dbReference type="eggNOG" id="ENOG502QS4Q">
    <property type="taxonomic scope" value="Eukaryota"/>
</dbReference>
<dbReference type="HOGENOM" id="CLU_031603_4_1_1"/>
<dbReference type="OMA" id="YFQLHDK"/>
<dbReference type="OrthoDB" id="406631at2759"/>
<dbReference type="Proteomes" id="UP000006702">
    <property type="component" value="Unassembled WGS sequence"/>
</dbReference>
<dbReference type="GO" id="GO:0005576">
    <property type="term" value="C:extracellular region"/>
    <property type="evidence" value="ECO:0007669"/>
    <property type="project" value="UniProtKB-SubCell"/>
</dbReference>
<dbReference type="GO" id="GO:0030248">
    <property type="term" value="F:cellulose binding"/>
    <property type="evidence" value="ECO:0007669"/>
    <property type="project" value="InterPro"/>
</dbReference>
<dbReference type="GO" id="GO:0016985">
    <property type="term" value="F:mannan endo-1,4-beta-mannosidase activity"/>
    <property type="evidence" value="ECO:0007669"/>
    <property type="project" value="UniProtKB-EC"/>
</dbReference>
<dbReference type="GO" id="GO:0046355">
    <property type="term" value="P:mannan catabolic process"/>
    <property type="evidence" value="ECO:0007669"/>
    <property type="project" value="UniProtKB-ARBA"/>
</dbReference>
<dbReference type="FunFam" id="3.20.20.80:FF:000076">
    <property type="entry name" value="Mannan endo-1,4-beta-mannosidase A"/>
    <property type="match status" value="1"/>
</dbReference>
<dbReference type="Gene3D" id="3.20.20.80">
    <property type="entry name" value="Glycosidases"/>
    <property type="match status" value="1"/>
</dbReference>
<dbReference type="InterPro" id="IPR035971">
    <property type="entry name" value="CBD_sf"/>
</dbReference>
<dbReference type="InterPro" id="IPR000254">
    <property type="entry name" value="Cellulose-bd_dom_fun"/>
</dbReference>
<dbReference type="InterPro" id="IPR001547">
    <property type="entry name" value="Glyco_hydro_5"/>
</dbReference>
<dbReference type="InterPro" id="IPR017853">
    <property type="entry name" value="Glycoside_hydrolase_SF"/>
</dbReference>
<dbReference type="InterPro" id="IPR045053">
    <property type="entry name" value="MAN-like"/>
</dbReference>
<dbReference type="PANTHER" id="PTHR31451">
    <property type="match status" value="1"/>
</dbReference>
<dbReference type="PANTHER" id="PTHR31451:SF57">
    <property type="entry name" value="BETA-1,4-ENDOGLUCANASE (EUROFUNG)-RELATED"/>
    <property type="match status" value="1"/>
</dbReference>
<dbReference type="Pfam" id="PF00734">
    <property type="entry name" value="CBM_1"/>
    <property type="match status" value="1"/>
</dbReference>
<dbReference type="Pfam" id="PF00150">
    <property type="entry name" value="Cellulase"/>
    <property type="match status" value="1"/>
</dbReference>
<dbReference type="SMART" id="SM00236">
    <property type="entry name" value="fCBD"/>
    <property type="match status" value="1"/>
</dbReference>
<dbReference type="SUPFAM" id="SSF51445">
    <property type="entry name" value="(Trans)glycosidases"/>
    <property type="match status" value="1"/>
</dbReference>
<dbReference type="SUPFAM" id="SSF57180">
    <property type="entry name" value="Cellulose-binding domain"/>
    <property type="match status" value="1"/>
</dbReference>
<dbReference type="PROSITE" id="PS00562">
    <property type="entry name" value="CBM1_1"/>
    <property type="match status" value="1"/>
</dbReference>
<dbReference type="PROSITE" id="PS51164">
    <property type="entry name" value="CBM1_2"/>
    <property type="match status" value="1"/>
</dbReference>
<feature type="signal peptide" evidence="4">
    <location>
        <begin position="1"/>
        <end position="18"/>
    </location>
</feature>
<feature type="chain" id="PRO_0000393718" description="Probable mannan endo-1,4-beta-mannosidase F">
    <location>
        <begin position="19"/>
        <end position="456"/>
    </location>
</feature>
<feature type="domain" description="CBM1" evidence="5">
    <location>
        <begin position="19"/>
        <end position="54"/>
    </location>
</feature>
<feature type="region of interest" description="Ser-rich linker">
    <location>
        <begin position="79"/>
        <end position="113"/>
    </location>
</feature>
<feature type="region of interest" description="Disordered" evidence="6">
    <location>
        <begin position="79"/>
        <end position="110"/>
    </location>
</feature>
<feature type="region of interest" description="Catalytic">
    <location>
        <begin position="114"/>
        <end position="456"/>
    </location>
</feature>
<feature type="active site" description="Proton donor" evidence="3">
    <location>
        <position position="281"/>
    </location>
</feature>
<feature type="active site" description="Nucleophile" evidence="3">
    <location>
        <position position="390"/>
    </location>
</feature>
<feature type="binding site" evidence="2">
    <location>
        <position position="166"/>
    </location>
    <ligand>
        <name>substrate</name>
    </ligand>
</feature>
<feature type="binding site" evidence="2">
    <location>
        <position position="280"/>
    </location>
    <ligand>
        <name>substrate</name>
    </ligand>
</feature>
<feature type="binding site" evidence="2">
    <location>
        <position position="356"/>
    </location>
    <ligand>
        <name>substrate</name>
    </ligand>
</feature>
<feature type="binding site" evidence="2">
    <location>
        <position position="420"/>
    </location>
    <ligand>
        <name>substrate</name>
    </ligand>
</feature>
<keyword id="KW-0119">Carbohydrate metabolism</keyword>
<keyword id="KW-0326">Glycosidase</keyword>
<keyword id="KW-0378">Hydrolase</keyword>
<keyword id="KW-1185">Reference proteome</keyword>
<keyword id="KW-0964">Secreted</keyword>
<keyword id="KW-0732">Signal</keyword>
<reference key="1">
    <citation type="journal article" date="2008" name="PLoS Genet.">
        <title>Genomic islands in the pathogenic filamentous fungus Aspergillus fumigatus.</title>
        <authorList>
            <person name="Fedorova N.D."/>
            <person name="Khaldi N."/>
            <person name="Joardar V.S."/>
            <person name="Maiti R."/>
            <person name="Amedeo P."/>
            <person name="Anderson M.J."/>
            <person name="Crabtree J."/>
            <person name="Silva J.C."/>
            <person name="Badger J.H."/>
            <person name="Albarraq A."/>
            <person name="Angiuoli S."/>
            <person name="Bussey H."/>
            <person name="Bowyer P."/>
            <person name="Cotty P.J."/>
            <person name="Dyer P.S."/>
            <person name="Egan A."/>
            <person name="Galens K."/>
            <person name="Fraser-Liggett C.M."/>
            <person name="Haas B.J."/>
            <person name="Inman J.M."/>
            <person name="Kent R."/>
            <person name="Lemieux S."/>
            <person name="Malavazi I."/>
            <person name="Orvis J."/>
            <person name="Roemer T."/>
            <person name="Ronning C.M."/>
            <person name="Sundaram J.P."/>
            <person name="Sutton G."/>
            <person name="Turner G."/>
            <person name="Venter J.C."/>
            <person name="White O.R."/>
            <person name="Whitty B.R."/>
            <person name="Youngman P."/>
            <person name="Wolfe K.H."/>
            <person name="Goldman G.H."/>
            <person name="Wortman J.R."/>
            <person name="Jiang B."/>
            <person name="Denning D.W."/>
            <person name="Nierman W.C."/>
        </authorList>
    </citation>
    <scope>NUCLEOTIDE SEQUENCE [LARGE SCALE GENOMIC DNA]</scope>
    <source>
        <strain>ATCC 1020 / DSM 3700 / CBS 544.65 / FGSC A1164 / JCM 1740 / NRRL 181 / WB 181</strain>
    </source>
</reference>